<gene>
    <name evidence="1" type="primary">rpsK</name>
    <name type="ordered locus">Haur_4938</name>
</gene>
<reference key="1">
    <citation type="journal article" date="2011" name="Stand. Genomic Sci.">
        <title>Complete genome sequence of the filamentous gliding predatory bacterium Herpetosiphon aurantiacus type strain (114-95(T)).</title>
        <authorList>
            <person name="Kiss H."/>
            <person name="Nett M."/>
            <person name="Domin N."/>
            <person name="Martin K."/>
            <person name="Maresca J.A."/>
            <person name="Copeland A."/>
            <person name="Lapidus A."/>
            <person name="Lucas S."/>
            <person name="Berry K.W."/>
            <person name="Glavina Del Rio T."/>
            <person name="Dalin E."/>
            <person name="Tice H."/>
            <person name="Pitluck S."/>
            <person name="Richardson P."/>
            <person name="Bruce D."/>
            <person name="Goodwin L."/>
            <person name="Han C."/>
            <person name="Detter J.C."/>
            <person name="Schmutz J."/>
            <person name="Brettin T."/>
            <person name="Land M."/>
            <person name="Hauser L."/>
            <person name="Kyrpides N.C."/>
            <person name="Ivanova N."/>
            <person name="Goeker M."/>
            <person name="Woyke T."/>
            <person name="Klenk H.P."/>
            <person name="Bryant D.A."/>
        </authorList>
    </citation>
    <scope>NUCLEOTIDE SEQUENCE [LARGE SCALE GENOMIC DNA]</scope>
    <source>
        <strain>ATCC 23779 / DSM 785 / 114-95</strain>
    </source>
</reference>
<sequence>MAKQAKAGAARRPQRGRRRERKNVPRGQAHVQATFNNTIVTITDPAGNVVCWSSAGASGFKGSRKSTPYAAQVTAEQAARKAMDNGMRVVEVYVKGPGAGRESAVRALQATGLSVIAITDVTPIPHNGCRPPKRRRV</sequence>
<organism>
    <name type="scientific">Herpetosiphon aurantiacus (strain ATCC 23779 / DSM 785 / 114-95)</name>
    <dbReference type="NCBI Taxonomy" id="316274"/>
    <lineage>
        <taxon>Bacteria</taxon>
        <taxon>Bacillati</taxon>
        <taxon>Chloroflexota</taxon>
        <taxon>Chloroflexia</taxon>
        <taxon>Herpetosiphonales</taxon>
        <taxon>Herpetosiphonaceae</taxon>
        <taxon>Herpetosiphon</taxon>
    </lineage>
</organism>
<feature type="chain" id="PRO_1000141102" description="Small ribosomal subunit protein uS11">
    <location>
        <begin position="1"/>
        <end position="137"/>
    </location>
</feature>
<feature type="region of interest" description="Disordered" evidence="2">
    <location>
        <begin position="1"/>
        <end position="32"/>
    </location>
</feature>
<feature type="compositionally biased region" description="Low complexity" evidence="2">
    <location>
        <begin position="1"/>
        <end position="11"/>
    </location>
</feature>
<feature type="compositionally biased region" description="Basic residues" evidence="2">
    <location>
        <begin position="12"/>
        <end position="21"/>
    </location>
</feature>
<accession>A9B435</accession>
<dbReference type="EMBL" id="CP000875">
    <property type="protein sequence ID" value="ABX07568.1"/>
    <property type="molecule type" value="Genomic_DNA"/>
</dbReference>
<dbReference type="SMR" id="A9B435"/>
<dbReference type="FunCoup" id="A9B435">
    <property type="interactions" value="516"/>
</dbReference>
<dbReference type="STRING" id="316274.Haur_4938"/>
<dbReference type="KEGG" id="hau:Haur_4938"/>
<dbReference type="eggNOG" id="COG0100">
    <property type="taxonomic scope" value="Bacteria"/>
</dbReference>
<dbReference type="HOGENOM" id="CLU_072439_5_0_0"/>
<dbReference type="InParanoid" id="A9B435"/>
<dbReference type="Proteomes" id="UP000000787">
    <property type="component" value="Chromosome"/>
</dbReference>
<dbReference type="GO" id="GO:1990904">
    <property type="term" value="C:ribonucleoprotein complex"/>
    <property type="evidence" value="ECO:0007669"/>
    <property type="project" value="UniProtKB-KW"/>
</dbReference>
<dbReference type="GO" id="GO:0005840">
    <property type="term" value="C:ribosome"/>
    <property type="evidence" value="ECO:0007669"/>
    <property type="project" value="UniProtKB-KW"/>
</dbReference>
<dbReference type="GO" id="GO:0019843">
    <property type="term" value="F:rRNA binding"/>
    <property type="evidence" value="ECO:0007669"/>
    <property type="project" value="UniProtKB-UniRule"/>
</dbReference>
<dbReference type="GO" id="GO:0003735">
    <property type="term" value="F:structural constituent of ribosome"/>
    <property type="evidence" value="ECO:0007669"/>
    <property type="project" value="InterPro"/>
</dbReference>
<dbReference type="GO" id="GO:0006412">
    <property type="term" value="P:translation"/>
    <property type="evidence" value="ECO:0007669"/>
    <property type="project" value="UniProtKB-UniRule"/>
</dbReference>
<dbReference type="FunFam" id="3.30.420.80:FF:000001">
    <property type="entry name" value="30S ribosomal protein S11"/>
    <property type="match status" value="1"/>
</dbReference>
<dbReference type="Gene3D" id="3.30.420.80">
    <property type="entry name" value="Ribosomal protein S11"/>
    <property type="match status" value="1"/>
</dbReference>
<dbReference type="HAMAP" id="MF_01310">
    <property type="entry name" value="Ribosomal_uS11"/>
    <property type="match status" value="1"/>
</dbReference>
<dbReference type="InterPro" id="IPR001971">
    <property type="entry name" value="Ribosomal_uS11"/>
</dbReference>
<dbReference type="InterPro" id="IPR019981">
    <property type="entry name" value="Ribosomal_uS11_bac-type"/>
</dbReference>
<dbReference type="InterPro" id="IPR018102">
    <property type="entry name" value="Ribosomal_uS11_CS"/>
</dbReference>
<dbReference type="InterPro" id="IPR036967">
    <property type="entry name" value="Ribosomal_uS11_sf"/>
</dbReference>
<dbReference type="NCBIfam" id="NF003698">
    <property type="entry name" value="PRK05309.1"/>
    <property type="match status" value="1"/>
</dbReference>
<dbReference type="NCBIfam" id="TIGR03632">
    <property type="entry name" value="uS11_bact"/>
    <property type="match status" value="1"/>
</dbReference>
<dbReference type="PANTHER" id="PTHR11759">
    <property type="entry name" value="40S RIBOSOMAL PROTEIN S14/30S RIBOSOMAL PROTEIN S11"/>
    <property type="match status" value="1"/>
</dbReference>
<dbReference type="Pfam" id="PF00411">
    <property type="entry name" value="Ribosomal_S11"/>
    <property type="match status" value="1"/>
</dbReference>
<dbReference type="PIRSF" id="PIRSF002131">
    <property type="entry name" value="Ribosomal_S11"/>
    <property type="match status" value="1"/>
</dbReference>
<dbReference type="SUPFAM" id="SSF53137">
    <property type="entry name" value="Translational machinery components"/>
    <property type="match status" value="1"/>
</dbReference>
<dbReference type="PROSITE" id="PS00054">
    <property type="entry name" value="RIBOSOMAL_S11"/>
    <property type="match status" value="1"/>
</dbReference>
<comment type="function">
    <text evidence="1">Located on the platform of the 30S subunit, it bridges several disparate RNA helices of the 16S rRNA. Forms part of the Shine-Dalgarno cleft in the 70S ribosome.</text>
</comment>
<comment type="subunit">
    <text evidence="1">Part of the 30S ribosomal subunit. Interacts with proteins S7 and S18. Binds to IF-3.</text>
</comment>
<comment type="similarity">
    <text evidence="1">Belongs to the universal ribosomal protein uS11 family.</text>
</comment>
<evidence type="ECO:0000255" key="1">
    <source>
        <dbReference type="HAMAP-Rule" id="MF_01310"/>
    </source>
</evidence>
<evidence type="ECO:0000256" key="2">
    <source>
        <dbReference type="SAM" id="MobiDB-lite"/>
    </source>
</evidence>
<evidence type="ECO:0000305" key="3"/>
<protein>
    <recommendedName>
        <fullName evidence="1">Small ribosomal subunit protein uS11</fullName>
    </recommendedName>
    <alternativeName>
        <fullName evidence="3">30S ribosomal protein S11</fullName>
    </alternativeName>
</protein>
<keyword id="KW-0687">Ribonucleoprotein</keyword>
<keyword id="KW-0689">Ribosomal protein</keyword>
<keyword id="KW-0694">RNA-binding</keyword>
<keyword id="KW-0699">rRNA-binding</keyword>
<proteinExistence type="inferred from homology"/>
<name>RS11_HERA2</name>